<sequence length="198" mass="22358">MTPLSKIEALLFVAGEDGLSLRQLATLLDIPVTALLQQLEKMAQKYERDDNSALSLLESSKTYKLVTKKDYADLLRQYSKTPINQSLSRASLEVLSIIAYKQPITRIEVDNIRGVNSSSAISKLQAFDLIQEAGKKEVLGRPNLYVTSDYFLDYMGINSLEELPDASSIELKDEEFTLFDNKENEEQISENVKEENEN</sequence>
<accession>Q7ZAK9</accession>
<gene>
    <name evidence="1" type="primary">scpB</name>
    <name type="ordered locus">SMU_1712c</name>
</gene>
<dbReference type="EMBL" id="AE014133">
    <property type="protein sequence ID" value="AAN59347.1"/>
    <property type="molecule type" value="Genomic_DNA"/>
</dbReference>
<dbReference type="RefSeq" id="NP_722041.1">
    <property type="nucleotide sequence ID" value="NC_004350.2"/>
</dbReference>
<dbReference type="RefSeq" id="WP_002262562.1">
    <property type="nucleotide sequence ID" value="NC_004350.2"/>
</dbReference>
<dbReference type="SMR" id="Q7ZAK9"/>
<dbReference type="STRING" id="210007.SMU_1712c"/>
<dbReference type="KEGG" id="smu:SMU_1712c"/>
<dbReference type="PATRIC" id="fig|210007.7.peg.1530"/>
<dbReference type="eggNOG" id="COG1386">
    <property type="taxonomic scope" value="Bacteria"/>
</dbReference>
<dbReference type="HOGENOM" id="CLU_045647_5_3_9"/>
<dbReference type="OrthoDB" id="9806226at2"/>
<dbReference type="PhylomeDB" id="Q7ZAK9"/>
<dbReference type="Proteomes" id="UP000002512">
    <property type="component" value="Chromosome"/>
</dbReference>
<dbReference type="GO" id="GO:0005737">
    <property type="term" value="C:cytoplasm"/>
    <property type="evidence" value="ECO:0007669"/>
    <property type="project" value="UniProtKB-SubCell"/>
</dbReference>
<dbReference type="GO" id="GO:0051301">
    <property type="term" value="P:cell division"/>
    <property type="evidence" value="ECO:0007669"/>
    <property type="project" value="UniProtKB-KW"/>
</dbReference>
<dbReference type="GO" id="GO:0051304">
    <property type="term" value="P:chromosome separation"/>
    <property type="evidence" value="ECO:0007669"/>
    <property type="project" value="InterPro"/>
</dbReference>
<dbReference type="GO" id="GO:0006260">
    <property type="term" value="P:DNA replication"/>
    <property type="evidence" value="ECO:0007669"/>
    <property type="project" value="UniProtKB-UniRule"/>
</dbReference>
<dbReference type="Gene3D" id="1.10.10.10">
    <property type="entry name" value="Winged helix-like DNA-binding domain superfamily/Winged helix DNA-binding domain"/>
    <property type="match status" value="2"/>
</dbReference>
<dbReference type="HAMAP" id="MF_01804">
    <property type="entry name" value="ScpB"/>
    <property type="match status" value="1"/>
</dbReference>
<dbReference type="InterPro" id="IPR005234">
    <property type="entry name" value="ScpB_csome_segregation"/>
</dbReference>
<dbReference type="InterPro" id="IPR036388">
    <property type="entry name" value="WH-like_DNA-bd_sf"/>
</dbReference>
<dbReference type="InterPro" id="IPR036390">
    <property type="entry name" value="WH_DNA-bd_sf"/>
</dbReference>
<dbReference type="NCBIfam" id="TIGR00281">
    <property type="entry name" value="SMC-Scp complex subunit ScpB"/>
    <property type="match status" value="1"/>
</dbReference>
<dbReference type="PANTHER" id="PTHR34298">
    <property type="entry name" value="SEGREGATION AND CONDENSATION PROTEIN B"/>
    <property type="match status" value="1"/>
</dbReference>
<dbReference type="PANTHER" id="PTHR34298:SF2">
    <property type="entry name" value="SEGREGATION AND CONDENSATION PROTEIN B"/>
    <property type="match status" value="1"/>
</dbReference>
<dbReference type="Pfam" id="PF04079">
    <property type="entry name" value="SMC_ScpB"/>
    <property type="match status" value="1"/>
</dbReference>
<dbReference type="PIRSF" id="PIRSF019345">
    <property type="entry name" value="ScpB"/>
    <property type="match status" value="1"/>
</dbReference>
<dbReference type="SUPFAM" id="SSF46785">
    <property type="entry name" value="Winged helix' DNA-binding domain"/>
    <property type="match status" value="2"/>
</dbReference>
<feature type="chain" id="PRO_0000211158" description="Segregation and condensation protein B">
    <location>
        <begin position="1"/>
        <end position="198"/>
    </location>
</feature>
<organism>
    <name type="scientific">Streptococcus mutans serotype c (strain ATCC 700610 / UA159)</name>
    <dbReference type="NCBI Taxonomy" id="210007"/>
    <lineage>
        <taxon>Bacteria</taxon>
        <taxon>Bacillati</taxon>
        <taxon>Bacillota</taxon>
        <taxon>Bacilli</taxon>
        <taxon>Lactobacillales</taxon>
        <taxon>Streptococcaceae</taxon>
        <taxon>Streptococcus</taxon>
    </lineage>
</organism>
<protein>
    <recommendedName>
        <fullName evidence="1">Segregation and condensation protein B</fullName>
    </recommendedName>
</protein>
<comment type="function">
    <text evidence="1">Participates in chromosomal partition during cell division. May act via the formation of a condensin-like complex containing Smc and ScpA that pull DNA away from mid-cell into both cell halves.</text>
</comment>
<comment type="subunit">
    <text evidence="1">Homodimer. Homodimerization may be required to stabilize the binding of ScpA to the Smc head domains. Component of a cohesin-like complex composed of ScpA, ScpB and the Smc homodimer, in which ScpA and ScpB bind to the head domain of Smc. The presence of the three proteins is required for the association of the complex with DNA.</text>
</comment>
<comment type="subcellular location">
    <subcellularLocation>
        <location evidence="1">Cytoplasm</location>
    </subcellularLocation>
    <text evidence="1">Associated with two foci at the outer edges of the nucleoid region in young cells, and at four foci within both cell halves in older cells.</text>
</comment>
<comment type="similarity">
    <text evidence="1">Belongs to the ScpB family.</text>
</comment>
<proteinExistence type="inferred from homology"/>
<reference key="1">
    <citation type="journal article" date="2002" name="Proc. Natl. Acad. Sci. U.S.A.">
        <title>Genome sequence of Streptococcus mutans UA159, a cariogenic dental pathogen.</title>
        <authorList>
            <person name="Ajdic D.J."/>
            <person name="McShan W.M."/>
            <person name="McLaughlin R.E."/>
            <person name="Savic G."/>
            <person name="Chang J."/>
            <person name="Carson M.B."/>
            <person name="Primeaux C."/>
            <person name="Tian R."/>
            <person name="Kenton S."/>
            <person name="Jia H.G."/>
            <person name="Lin S.P."/>
            <person name="Qian Y."/>
            <person name="Li S."/>
            <person name="Zhu H."/>
            <person name="Najar F.Z."/>
            <person name="Lai H."/>
            <person name="White J."/>
            <person name="Roe B.A."/>
            <person name="Ferretti J.J."/>
        </authorList>
    </citation>
    <scope>NUCLEOTIDE SEQUENCE [LARGE SCALE GENOMIC DNA]</scope>
    <source>
        <strain>ATCC 700610 / UA159</strain>
    </source>
</reference>
<keyword id="KW-0131">Cell cycle</keyword>
<keyword id="KW-0132">Cell division</keyword>
<keyword id="KW-0159">Chromosome partition</keyword>
<keyword id="KW-0963">Cytoplasm</keyword>
<keyword id="KW-1185">Reference proteome</keyword>
<name>SCPB_STRMU</name>
<evidence type="ECO:0000255" key="1">
    <source>
        <dbReference type="HAMAP-Rule" id="MF_01804"/>
    </source>
</evidence>